<evidence type="ECO:0000255" key="1">
    <source>
        <dbReference type="HAMAP-Rule" id="MF_01703"/>
    </source>
</evidence>
<gene>
    <name evidence="1" type="primary">msbA</name>
    <name type="ordered locus">Sde_0387</name>
</gene>
<sequence length="586" mass="64540">MSTPAKPTSVESYKRLLSYAFKYKAYFIISFIGFGVFAAMEAQLINILEYFVDRLEGRPSAPVLGLSADVTSSLWFVPISVVVLSIIRGIGAYFGNFYMSLVGLNVITNLRRQIFSQMIYLPQSFYDTKNSGELISLLVYNIEQVTGSVTNAVKTLFRDGMSVAWFLAMMLIINWKLTLAFICVAPVLGGLMYIASKYFRKVSHKIQSAVGRVSHVATESIQGIKLVKSYGGEKYELDRFNDATNQNLHYGTKFERVSAFQTPVLHIVLALALAVTFYLIMILWDSDSSKAVVYATYAAAIAKPFRQLTKINSIIQKGLAAADTIFEVLDLQAEPNSGQQKLNAPKGRVELKDVHFGYNQDTPALNGISFAIEPGQTVALVGSSGSGKSTIVSLLLRFYDNQQGSITIDGTPIQSLELHNLREHIALVNQQTILFNDTIAANIAYGSEHIDEARIQDAAKQANAHDFIMALPNGYQTPAGEDGSRLSGGQRQRIAIARALYKNAPILILDEATSALDNESEKQIQSALDELKQGRTTLVIAHRLSTIENADTILVMDNGRIVEAGNHQTLLDRSGVYANLYHSQFS</sequence>
<feature type="chain" id="PRO_0000271649" description="ATP-dependent lipid A-core flippase">
    <location>
        <begin position="1"/>
        <end position="586"/>
    </location>
</feature>
<feature type="transmembrane region" description="Helical" evidence="1">
    <location>
        <begin position="25"/>
        <end position="45"/>
    </location>
</feature>
<feature type="transmembrane region" description="Helical" evidence="1">
    <location>
        <begin position="74"/>
        <end position="94"/>
    </location>
</feature>
<feature type="transmembrane region" description="Helical" evidence="1">
    <location>
        <begin position="163"/>
        <end position="183"/>
    </location>
</feature>
<feature type="transmembrane region" description="Helical" evidence="1">
    <location>
        <begin position="264"/>
        <end position="284"/>
    </location>
</feature>
<feature type="domain" description="ABC transmembrane type-1" evidence="1">
    <location>
        <begin position="28"/>
        <end position="317"/>
    </location>
</feature>
<feature type="domain" description="ABC transporter" evidence="1">
    <location>
        <begin position="349"/>
        <end position="583"/>
    </location>
</feature>
<feature type="binding site" evidence="1">
    <location>
        <begin position="382"/>
        <end position="389"/>
    </location>
    <ligand>
        <name>ATP</name>
        <dbReference type="ChEBI" id="CHEBI:30616"/>
    </ligand>
</feature>
<organism>
    <name type="scientific">Saccharophagus degradans (strain 2-40 / ATCC 43961 / DSM 17024)</name>
    <dbReference type="NCBI Taxonomy" id="203122"/>
    <lineage>
        <taxon>Bacteria</taxon>
        <taxon>Pseudomonadati</taxon>
        <taxon>Pseudomonadota</taxon>
        <taxon>Gammaproteobacteria</taxon>
        <taxon>Cellvibrionales</taxon>
        <taxon>Cellvibrionaceae</taxon>
        <taxon>Saccharophagus</taxon>
    </lineage>
</organism>
<name>MSBA_SACD2</name>
<proteinExistence type="inferred from homology"/>
<comment type="function">
    <text evidence="1">Involved in lipopolysaccharide (LPS) biosynthesis. Translocates lipid A-core from the inner to the outer leaflet of the inner membrane. Transmembrane domains (TMD) form a pore in the inner membrane and the ATP-binding domain (NBD) is responsible for energy generation.</text>
</comment>
<comment type="catalytic activity">
    <reaction evidence="1">
        <text>ATP + H2O + lipid A-core oligosaccharideSide 1 = ADP + phosphate + lipid A-core oligosaccharideSide 2.</text>
        <dbReference type="EC" id="7.5.2.6"/>
    </reaction>
</comment>
<comment type="subunit">
    <text evidence="1">Homodimer.</text>
</comment>
<comment type="subcellular location">
    <subcellularLocation>
        <location evidence="1">Cell inner membrane</location>
        <topology evidence="1">Multi-pass membrane protein</topology>
    </subcellularLocation>
</comment>
<comment type="domain">
    <text evidence="1">In MsbA the ATP-binding domain (NBD) and the transmembrane domain (TMD) are fused.</text>
</comment>
<comment type="similarity">
    <text evidence="1">Belongs to the ABC transporter superfamily. Lipid exporter (TC 3.A.1.106) family.</text>
</comment>
<protein>
    <recommendedName>
        <fullName evidence="1">ATP-dependent lipid A-core flippase</fullName>
        <ecNumber evidence="1">7.5.2.6</ecNumber>
    </recommendedName>
    <alternativeName>
        <fullName evidence="1">Lipid A export ATP-binding/permease protein MsbA</fullName>
    </alternativeName>
</protein>
<accession>Q21NS8</accession>
<dbReference type="EC" id="7.5.2.6" evidence="1"/>
<dbReference type="EMBL" id="CP000282">
    <property type="protein sequence ID" value="ABD79651.1"/>
    <property type="molecule type" value="Genomic_DNA"/>
</dbReference>
<dbReference type="RefSeq" id="WP_011466875.1">
    <property type="nucleotide sequence ID" value="NC_007912.1"/>
</dbReference>
<dbReference type="SMR" id="Q21NS8"/>
<dbReference type="STRING" id="203122.Sde_0387"/>
<dbReference type="GeneID" id="98612086"/>
<dbReference type="KEGG" id="sde:Sde_0387"/>
<dbReference type="eggNOG" id="COG1132">
    <property type="taxonomic scope" value="Bacteria"/>
</dbReference>
<dbReference type="HOGENOM" id="CLU_000604_84_1_6"/>
<dbReference type="OrthoDB" id="9806127at2"/>
<dbReference type="Proteomes" id="UP000001947">
    <property type="component" value="Chromosome"/>
</dbReference>
<dbReference type="GO" id="GO:0005886">
    <property type="term" value="C:plasma membrane"/>
    <property type="evidence" value="ECO:0007669"/>
    <property type="project" value="UniProtKB-SubCell"/>
</dbReference>
<dbReference type="GO" id="GO:0015421">
    <property type="term" value="F:ABC-type oligopeptide transporter activity"/>
    <property type="evidence" value="ECO:0007669"/>
    <property type="project" value="TreeGrafter"/>
</dbReference>
<dbReference type="GO" id="GO:0005524">
    <property type="term" value="F:ATP binding"/>
    <property type="evidence" value="ECO:0007669"/>
    <property type="project" value="UniProtKB-KW"/>
</dbReference>
<dbReference type="GO" id="GO:0016887">
    <property type="term" value="F:ATP hydrolysis activity"/>
    <property type="evidence" value="ECO:0007669"/>
    <property type="project" value="InterPro"/>
</dbReference>
<dbReference type="GO" id="GO:0034040">
    <property type="term" value="F:ATPase-coupled lipid transmembrane transporter activity"/>
    <property type="evidence" value="ECO:0007669"/>
    <property type="project" value="InterPro"/>
</dbReference>
<dbReference type="CDD" id="cd18552">
    <property type="entry name" value="ABC_6TM_MsbA_like"/>
    <property type="match status" value="1"/>
</dbReference>
<dbReference type="FunFam" id="3.40.50.300:FF:000218">
    <property type="entry name" value="Multidrug ABC transporter ATP-binding protein"/>
    <property type="match status" value="1"/>
</dbReference>
<dbReference type="Gene3D" id="1.20.1560.10">
    <property type="entry name" value="ABC transporter type 1, transmembrane domain"/>
    <property type="match status" value="1"/>
</dbReference>
<dbReference type="Gene3D" id="3.40.50.300">
    <property type="entry name" value="P-loop containing nucleotide triphosphate hydrolases"/>
    <property type="match status" value="1"/>
</dbReference>
<dbReference type="InterPro" id="IPR003593">
    <property type="entry name" value="AAA+_ATPase"/>
</dbReference>
<dbReference type="InterPro" id="IPR011527">
    <property type="entry name" value="ABC1_TM_dom"/>
</dbReference>
<dbReference type="InterPro" id="IPR036640">
    <property type="entry name" value="ABC1_TM_sf"/>
</dbReference>
<dbReference type="InterPro" id="IPR003439">
    <property type="entry name" value="ABC_transporter-like_ATP-bd"/>
</dbReference>
<dbReference type="InterPro" id="IPR017871">
    <property type="entry name" value="ABC_transporter-like_CS"/>
</dbReference>
<dbReference type="InterPro" id="IPR011917">
    <property type="entry name" value="ABC_transpr_lipidA"/>
</dbReference>
<dbReference type="InterPro" id="IPR027417">
    <property type="entry name" value="P-loop_NTPase"/>
</dbReference>
<dbReference type="InterPro" id="IPR039421">
    <property type="entry name" value="Type_1_exporter"/>
</dbReference>
<dbReference type="NCBIfam" id="TIGR02203">
    <property type="entry name" value="MsbA_lipidA"/>
    <property type="match status" value="1"/>
</dbReference>
<dbReference type="PANTHER" id="PTHR43394:SF1">
    <property type="entry name" value="ATP-BINDING CASSETTE SUB-FAMILY B MEMBER 10, MITOCHONDRIAL"/>
    <property type="match status" value="1"/>
</dbReference>
<dbReference type="PANTHER" id="PTHR43394">
    <property type="entry name" value="ATP-DEPENDENT PERMEASE MDL1, MITOCHONDRIAL"/>
    <property type="match status" value="1"/>
</dbReference>
<dbReference type="Pfam" id="PF00664">
    <property type="entry name" value="ABC_membrane"/>
    <property type="match status" value="1"/>
</dbReference>
<dbReference type="Pfam" id="PF00005">
    <property type="entry name" value="ABC_tran"/>
    <property type="match status" value="1"/>
</dbReference>
<dbReference type="SMART" id="SM00382">
    <property type="entry name" value="AAA"/>
    <property type="match status" value="1"/>
</dbReference>
<dbReference type="SUPFAM" id="SSF90123">
    <property type="entry name" value="ABC transporter transmembrane region"/>
    <property type="match status" value="1"/>
</dbReference>
<dbReference type="SUPFAM" id="SSF52540">
    <property type="entry name" value="P-loop containing nucleoside triphosphate hydrolases"/>
    <property type="match status" value="1"/>
</dbReference>
<dbReference type="PROSITE" id="PS50929">
    <property type="entry name" value="ABC_TM1F"/>
    <property type="match status" value="1"/>
</dbReference>
<dbReference type="PROSITE" id="PS00211">
    <property type="entry name" value="ABC_TRANSPORTER_1"/>
    <property type="match status" value="1"/>
</dbReference>
<dbReference type="PROSITE" id="PS50893">
    <property type="entry name" value="ABC_TRANSPORTER_2"/>
    <property type="match status" value="1"/>
</dbReference>
<dbReference type="PROSITE" id="PS51239">
    <property type="entry name" value="MSBA"/>
    <property type="match status" value="1"/>
</dbReference>
<keyword id="KW-0067">ATP-binding</keyword>
<keyword id="KW-0997">Cell inner membrane</keyword>
<keyword id="KW-1003">Cell membrane</keyword>
<keyword id="KW-0445">Lipid transport</keyword>
<keyword id="KW-0472">Membrane</keyword>
<keyword id="KW-0547">Nucleotide-binding</keyword>
<keyword id="KW-1185">Reference proteome</keyword>
<keyword id="KW-1278">Translocase</keyword>
<keyword id="KW-0812">Transmembrane</keyword>
<keyword id="KW-1133">Transmembrane helix</keyword>
<keyword id="KW-0813">Transport</keyword>
<reference key="1">
    <citation type="journal article" date="2008" name="PLoS Genet.">
        <title>Complete genome sequence of the complex carbohydrate-degrading marine bacterium, Saccharophagus degradans strain 2-40 T.</title>
        <authorList>
            <person name="Weiner R.M."/>
            <person name="Taylor L.E. II"/>
            <person name="Henrissat B."/>
            <person name="Hauser L."/>
            <person name="Land M."/>
            <person name="Coutinho P.M."/>
            <person name="Rancurel C."/>
            <person name="Saunders E.H."/>
            <person name="Longmire A.G."/>
            <person name="Zhang H."/>
            <person name="Bayer E.A."/>
            <person name="Gilbert H.J."/>
            <person name="Larimer F."/>
            <person name="Zhulin I.B."/>
            <person name="Ekborg N.A."/>
            <person name="Lamed R."/>
            <person name="Richardson P.M."/>
            <person name="Borovok I."/>
            <person name="Hutcheson S."/>
        </authorList>
    </citation>
    <scope>NUCLEOTIDE SEQUENCE [LARGE SCALE GENOMIC DNA]</scope>
    <source>
        <strain>2-40 / ATCC 43961 / DSM 17024</strain>
    </source>
</reference>